<reference key="1">
    <citation type="submission" date="2007-08" db="EMBL/GenBank/DDBJ databases">
        <authorList>
            <consortium name="The Vibrio harveyi Genome Sequencing Project"/>
            <person name="Bassler B."/>
            <person name="Clifton S.W."/>
            <person name="Fulton L."/>
            <person name="Delehaunty K."/>
            <person name="Fronick C."/>
            <person name="Harrison M."/>
            <person name="Markivic C."/>
            <person name="Fulton R."/>
            <person name="Tin-Wollam A.-M."/>
            <person name="Shah N."/>
            <person name="Pepin K."/>
            <person name="Nash W."/>
            <person name="Thiruvilangam P."/>
            <person name="Bhonagiri V."/>
            <person name="Waters C."/>
            <person name="Tu K.C."/>
            <person name="Irgon J."/>
            <person name="Wilson R.K."/>
        </authorList>
    </citation>
    <scope>NUCLEOTIDE SEQUENCE [LARGE SCALE GENOMIC DNA]</scope>
    <source>
        <strain>ATCC BAA-1116 / BB120</strain>
    </source>
</reference>
<protein>
    <recommendedName>
        <fullName evidence="1">Imidazolonepropionase</fullName>
        <ecNumber evidence="1">3.5.2.7</ecNumber>
    </recommendedName>
    <alternativeName>
        <fullName evidence="1">Imidazolone-5-propionate hydrolase</fullName>
    </alternativeName>
</protein>
<sequence length="416" mass="45221">MDLLIENARLVTMQEGEQGYLPSPLARVGIRSGKIVALSTVTKGEDSAETESTLNPDHYEQTIDLQSKLLLPGLIDCHTHLVYAGNRANEFEMRLNGVPYEEIAKQGGGILSTVRATREASEEQLIELALPRLDGLLASGITSAEVKSGYGLTLQDEIKMLRAAKALEQERKVKITTTLLAAHALPPEFKGRADDYIQHICDDIIPLVAEEKLATSVDVFCESIGFNLAQTERVFEAAKKHGLHVKGHTEQLSDLGGTTLTAEYSGLSADHIEYLDEVGVRSLANSSTVATLLPGAFYFLRETQLPPIELLRAHKVPMAIATDINPGTSPFADLTLMLNMACTLFRLTPQEALRGVTQNAAKALGYGESRGVIEIGYDADFSIWDIEHPADLSYQVGAKRLVGRIVNGEYVSHGGL</sequence>
<comment type="function">
    <text evidence="1">Catalyzes the hydrolytic cleavage of the carbon-nitrogen bond in imidazolone-5-propanoate to yield N-formimidoyl-L-glutamate. It is the third step in the universal histidine degradation pathway.</text>
</comment>
<comment type="catalytic activity">
    <reaction evidence="1">
        <text>4-imidazolone-5-propanoate + H2O = N-formimidoyl-L-glutamate</text>
        <dbReference type="Rhea" id="RHEA:23660"/>
        <dbReference type="ChEBI" id="CHEBI:15377"/>
        <dbReference type="ChEBI" id="CHEBI:58928"/>
        <dbReference type="ChEBI" id="CHEBI:77893"/>
        <dbReference type="EC" id="3.5.2.7"/>
    </reaction>
</comment>
<comment type="cofactor">
    <cofactor evidence="1">
        <name>Zn(2+)</name>
        <dbReference type="ChEBI" id="CHEBI:29105"/>
    </cofactor>
    <cofactor evidence="1">
        <name>Fe(3+)</name>
        <dbReference type="ChEBI" id="CHEBI:29034"/>
    </cofactor>
    <text evidence="1">Binds 1 zinc or iron ion per subunit.</text>
</comment>
<comment type="pathway">
    <text evidence="1">Amino-acid degradation; L-histidine degradation into L-glutamate; N-formimidoyl-L-glutamate from L-histidine: step 3/3.</text>
</comment>
<comment type="subcellular location">
    <subcellularLocation>
        <location evidence="1">Cytoplasm</location>
    </subcellularLocation>
</comment>
<comment type="similarity">
    <text evidence="1">Belongs to the metallo-dependent hydrolases superfamily. HutI family.</text>
</comment>
<organism>
    <name type="scientific">Vibrio campbellii (strain ATCC BAA-1116)</name>
    <dbReference type="NCBI Taxonomy" id="2902295"/>
    <lineage>
        <taxon>Bacteria</taxon>
        <taxon>Pseudomonadati</taxon>
        <taxon>Pseudomonadota</taxon>
        <taxon>Gammaproteobacteria</taxon>
        <taxon>Vibrionales</taxon>
        <taxon>Vibrionaceae</taxon>
        <taxon>Vibrio</taxon>
    </lineage>
</organism>
<name>HUTI_VIBC1</name>
<dbReference type="EC" id="3.5.2.7" evidence="1"/>
<dbReference type="EMBL" id="CP000789">
    <property type="protein sequence ID" value="ABU71040.1"/>
    <property type="molecule type" value="Genomic_DNA"/>
</dbReference>
<dbReference type="RefSeq" id="WP_012127810.1">
    <property type="nucleotide sequence ID" value="NC_022269.1"/>
</dbReference>
<dbReference type="SMR" id="A7MVK3"/>
<dbReference type="KEGG" id="vha:VIBHAR_02075"/>
<dbReference type="PATRIC" id="fig|338187.25.peg.618"/>
<dbReference type="UniPathway" id="UPA00379">
    <property type="reaction ID" value="UER00551"/>
</dbReference>
<dbReference type="Proteomes" id="UP000008152">
    <property type="component" value="Chromosome I"/>
</dbReference>
<dbReference type="GO" id="GO:0005737">
    <property type="term" value="C:cytoplasm"/>
    <property type="evidence" value="ECO:0007669"/>
    <property type="project" value="UniProtKB-SubCell"/>
</dbReference>
<dbReference type="GO" id="GO:0050480">
    <property type="term" value="F:imidazolonepropionase activity"/>
    <property type="evidence" value="ECO:0007669"/>
    <property type="project" value="UniProtKB-UniRule"/>
</dbReference>
<dbReference type="GO" id="GO:0005506">
    <property type="term" value="F:iron ion binding"/>
    <property type="evidence" value="ECO:0007669"/>
    <property type="project" value="UniProtKB-UniRule"/>
</dbReference>
<dbReference type="GO" id="GO:0008270">
    <property type="term" value="F:zinc ion binding"/>
    <property type="evidence" value="ECO:0007669"/>
    <property type="project" value="UniProtKB-UniRule"/>
</dbReference>
<dbReference type="GO" id="GO:0019556">
    <property type="term" value="P:L-histidine catabolic process to glutamate and formamide"/>
    <property type="evidence" value="ECO:0007669"/>
    <property type="project" value="UniProtKB-UniPathway"/>
</dbReference>
<dbReference type="GO" id="GO:0019557">
    <property type="term" value="P:L-histidine catabolic process to glutamate and formate"/>
    <property type="evidence" value="ECO:0007669"/>
    <property type="project" value="UniProtKB-UniPathway"/>
</dbReference>
<dbReference type="CDD" id="cd01296">
    <property type="entry name" value="Imidazolone-5PH"/>
    <property type="match status" value="1"/>
</dbReference>
<dbReference type="FunFam" id="3.20.20.140:FF:000007">
    <property type="entry name" value="Imidazolonepropionase"/>
    <property type="match status" value="1"/>
</dbReference>
<dbReference type="Gene3D" id="3.20.20.140">
    <property type="entry name" value="Metal-dependent hydrolases"/>
    <property type="match status" value="1"/>
</dbReference>
<dbReference type="Gene3D" id="2.30.40.10">
    <property type="entry name" value="Urease, subunit C, domain 1"/>
    <property type="match status" value="1"/>
</dbReference>
<dbReference type="HAMAP" id="MF_00372">
    <property type="entry name" value="HutI"/>
    <property type="match status" value="1"/>
</dbReference>
<dbReference type="InterPro" id="IPR006680">
    <property type="entry name" value="Amidohydro-rel"/>
</dbReference>
<dbReference type="InterPro" id="IPR005920">
    <property type="entry name" value="HutI"/>
</dbReference>
<dbReference type="InterPro" id="IPR011059">
    <property type="entry name" value="Metal-dep_hydrolase_composite"/>
</dbReference>
<dbReference type="InterPro" id="IPR032466">
    <property type="entry name" value="Metal_Hydrolase"/>
</dbReference>
<dbReference type="NCBIfam" id="TIGR01224">
    <property type="entry name" value="hutI"/>
    <property type="match status" value="1"/>
</dbReference>
<dbReference type="PANTHER" id="PTHR42752">
    <property type="entry name" value="IMIDAZOLONEPROPIONASE"/>
    <property type="match status" value="1"/>
</dbReference>
<dbReference type="PANTHER" id="PTHR42752:SF1">
    <property type="entry name" value="IMIDAZOLONEPROPIONASE-RELATED"/>
    <property type="match status" value="1"/>
</dbReference>
<dbReference type="Pfam" id="PF01979">
    <property type="entry name" value="Amidohydro_1"/>
    <property type="match status" value="1"/>
</dbReference>
<dbReference type="SUPFAM" id="SSF51338">
    <property type="entry name" value="Composite domain of metallo-dependent hydrolases"/>
    <property type="match status" value="1"/>
</dbReference>
<dbReference type="SUPFAM" id="SSF51556">
    <property type="entry name" value="Metallo-dependent hydrolases"/>
    <property type="match status" value="1"/>
</dbReference>
<gene>
    <name evidence="1" type="primary">hutI</name>
    <name type="ordered locus">VIBHAR_02075</name>
</gene>
<evidence type="ECO:0000255" key="1">
    <source>
        <dbReference type="HAMAP-Rule" id="MF_00372"/>
    </source>
</evidence>
<keyword id="KW-0963">Cytoplasm</keyword>
<keyword id="KW-0369">Histidine metabolism</keyword>
<keyword id="KW-0378">Hydrolase</keyword>
<keyword id="KW-0408">Iron</keyword>
<keyword id="KW-0479">Metal-binding</keyword>
<keyword id="KW-0862">Zinc</keyword>
<feature type="chain" id="PRO_1000007151" description="Imidazolonepropionase">
    <location>
        <begin position="1"/>
        <end position="416"/>
    </location>
</feature>
<feature type="binding site" evidence="1">
    <location>
        <position position="78"/>
    </location>
    <ligand>
        <name>Fe(3+)</name>
        <dbReference type="ChEBI" id="CHEBI:29034"/>
    </ligand>
</feature>
<feature type="binding site" evidence="1">
    <location>
        <position position="78"/>
    </location>
    <ligand>
        <name>Zn(2+)</name>
        <dbReference type="ChEBI" id="CHEBI:29105"/>
    </ligand>
</feature>
<feature type="binding site" evidence="1">
    <location>
        <position position="80"/>
    </location>
    <ligand>
        <name>Fe(3+)</name>
        <dbReference type="ChEBI" id="CHEBI:29034"/>
    </ligand>
</feature>
<feature type="binding site" evidence="1">
    <location>
        <position position="80"/>
    </location>
    <ligand>
        <name>Zn(2+)</name>
        <dbReference type="ChEBI" id="CHEBI:29105"/>
    </ligand>
</feature>
<feature type="binding site" evidence="1">
    <location>
        <position position="87"/>
    </location>
    <ligand>
        <name>4-imidazolone-5-propanoate</name>
        <dbReference type="ChEBI" id="CHEBI:77893"/>
    </ligand>
</feature>
<feature type="binding site" evidence="1">
    <location>
        <position position="150"/>
    </location>
    <ligand>
        <name>4-imidazolone-5-propanoate</name>
        <dbReference type="ChEBI" id="CHEBI:77893"/>
    </ligand>
</feature>
<feature type="binding site" evidence="1">
    <location>
        <position position="150"/>
    </location>
    <ligand>
        <name>N-formimidoyl-L-glutamate</name>
        <dbReference type="ChEBI" id="CHEBI:58928"/>
    </ligand>
</feature>
<feature type="binding site" evidence="1">
    <location>
        <position position="183"/>
    </location>
    <ligand>
        <name>4-imidazolone-5-propanoate</name>
        <dbReference type="ChEBI" id="CHEBI:77893"/>
    </ligand>
</feature>
<feature type="binding site" evidence="1">
    <location>
        <position position="248"/>
    </location>
    <ligand>
        <name>Fe(3+)</name>
        <dbReference type="ChEBI" id="CHEBI:29034"/>
    </ligand>
</feature>
<feature type="binding site" evidence="1">
    <location>
        <position position="248"/>
    </location>
    <ligand>
        <name>Zn(2+)</name>
        <dbReference type="ChEBI" id="CHEBI:29105"/>
    </ligand>
</feature>
<feature type="binding site" evidence="1">
    <location>
        <position position="251"/>
    </location>
    <ligand>
        <name>4-imidazolone-5-propanoate</name>
        <dbReference type="ChEBI" id="CHEBI:77893"/>
    </ligand>
</feature>
<feature type="binding site" evidence="1">
    <location>
        <position position="323"/>
    </location>
    <ligand>
        <name>Fe(3+)</name>
        <dbReference type="ChEBI" id="CHEBI:29034"/>
    </ligand>
</feature>
<feature type="binding site" evidence="1">
    <location>
        <position position="323"/>
    </location>
    <ligand>
        <name>Zn(2+)</name>
        <dbReference type="ChEBI" id="CHEBI:29105"/>
    </ligand>
</feature>
<feature type="binding site" evidence="1">
    <location>
        <position position="325"/>
    </location>
    <ligand>
        <name>N-formimidoyl-L-glutamate</name>
        <dbReference type="ChEBI" id="CHEBI:58928"/>
    </ligand>
</feature>
<feature type="binding site" evidence="1">
    <location>
        <position position="327"/>
    </location>
    <ligand>
        <name>N-formimidoyl-L-glutamate</name>
        <dbReference type="ChEBI" id="CHEBI:58928"/>
    </ligand>
</feature>
<feature type="binding site" evidence="1">
    <location>
        <position position="328"/>
    </location>
    <ligand>
        <name>4-imidazolone-5-propanoate</name>
        <dbReference type="ChEBI" id="CHEBI:77893"/>
    </ligand>
</feature>
<proteinExistence type="inferred from homology"/>
<accession>A7MVK3</accession>